<keyword id="KW-0210">Decarboxylase</keyword>
<keyword id="KW-0456">Lyase</keyword>
<keyword id="KW-0460">Magnesium</keyword>
<keyword id="KW-0479">Metal-binding</keyword>
<keyword id="KW-1185">Reference proteome</keyword>
<sequence>MPKASHQDLRRSFRALTSSNSCFHTASVFDPMSAQIAADLGFEVGILGGSVASLQVLAAPDFALITLSEFVEQATRIGRVAQLPVIADADHGYGNALNVMRTVVELERAGISALTIEDTLLPAQFGRKSTDLISTAEGVGKIRAALEARVDPEMSIFARTNAAIIPVQEAISRVQQYQAAGADGITIVGIRDFDHLAQVSEGITVPLMLVTYGNPELHDNARLAEMGVRVCVHGHAAYFAAIKATYDCLREQRQILGSESNMSATELTHTYTQPEDYVEWAKKFMNVNE</sequence>
<reference key="1">
    <citation type="journal article" date="2003" name="Proc. Natl. Acad. Sci. U.S.A.">
        <title>The complete genome sequence of the Arabidopsis and tomato pathogen Pseudomonas syringae pv. tomato DC3000.</title>
        <authorList>
            <person name="Buell C.R."/>
            <person name="Joardar V."/>
            <person name="Lindeberg M."/>
            <person name="Selengut J."/>
            <person name="Paulsen I.T."/>
            <person name="Gwinn M.L."/>
            <person name="Dodson R.J."/>
            <person name="DeBoy R.T."/>
            <person name="Durkin A.S."/>
            <person name="Kolonay J.F."/>
            <person name="Madupu R."/>
            <person name="Daugherty S.C."/>
            <person name="Brinkac L.M."/>
            <person name="Beanan M.J."/>
            <person name="Haft D.H."/>
            <person name="Nelson W.C."/>
            <person name="Davidsen T.M."/>
            <person name="Zafar N."/>
            <person name="Zhou L."/>
            <person name="Liu J."/>
            <person name="Yuan Q."/>
            <person name="Khouri H.M."/>
            <person name="Fedorova N.B."/>
            <person name="Tran B."/>
            <person name="Russell D."/>
            <person name="Berry K.J."/>
            <person name="Utterback T.R."/>
            <person name="Van Aken S.E."/>
            <person name="Feldblyum T.V."/>
            <person name="D'Ascenzo M."/>
            <person name="Deng W.-L."/>
            <person name="Ramos A.R."/>
            <person name="Alfano J.R."/>
            <person name="Cartinhour S."/>
            <person name="Chatterjee A.K."/>
            <person name="Delaney T.P."/>
            <person name="Lazarowitz S.G."/>
            <person name="Martin G.B."/>
            <person name="Schneider D.J."/>
            <person name="Tang X."/>
            <person name="Bender C.L."/>
            <person name="White O."/>
            <person name="Fraser C.M."/>
            <person name="Collmer A."/>
        </authorList>
    </citation>
    <scope>NUCLEOTIDE SEQUENCE [LARGE SCALE GENOMIC DNA]</scope>
    <source>
        <strain>ATCC BAA-871 / DC3000</strain>
    </source>
</reference>
<feature type="chain" id="PRO_0000364074" description="Oxaloacetate decarboxylase">
    <location>
        <begin position="1"/>
        <end position="289"/>
    </location>
</feature>
<feature type="binding site" evidence="1">
    <location>
        <position position="50"/>
    </location>
    <ligand>
        <name>substrate</name>
    </ligand>
</feature>
<feature type="binding site" evidence="1">
    <location>
        <position position="88"/>
    </location>
    <ligand>
        <name>Mg(2+)</name>
        <dbReference type="ChEBI" id="CHEBI:18420"/>
    </ligand>
</feature>
<feature type="binding site" evidence="1">
    <location>
        <position position="159"/>
    </location>
    <ligand>
        <name>substrate</name>
    </ligand>
</feature>
<feature type="binding site" evidence="1">
    <location>
        <position position="235"/>
    </location>
    <ligand>
        <name>substrate</name>
    </ligand>
</feature>
<evidence type="ECO:0000255" key="1">
    <source>
        <dbReference type="HAMAP-Rule" id="MF_01299"/>
    </source>
</evidence>
<evidence type="ECO:0000305" key="2"/>
<comment type="function">
    <text evidence="1">Catalyzes the decarboxylation of oxaloacetate into pyruvate. Seems to play a role in maintaining cellular concentrations of bicarbonate and pyruvate.</text>
</comment>
<comment type="catalytic activity">
    <reaction evidence="1">
        <text>oxaloacetate + H(+) = pyruvate + CO2</text>
        <dbReference type="Rhea" id="RHEA:15641"/>
        <dbReference type="ChEBI" id="CHEBI:15361"/>
        <dbReference type="ChEBI" id="CHEBI:15378"/>
        <dbReference type="ChEBI" id="CHEBI:16452"/>
        <dbReference type="ChEBI" id="CHEBI:16526"/>
        <dbReference type="EC" id="4.1.1.112"/>
    </reaction>
</comment>
<comment type="cofactor">
    <cofactor evidence="1">
        <name>Mg(2+)</name>
        <dbReference type="ChEBI" id="CHEBI:18420"/>
    </cofactor>
    <text evidence="1">Binds 1 Mg(2+) ion per subunit.</text>
</comment>
<comment type="subunit">
    <text evidence="1">Homotetramer; dimer of dimers.</text>
</comment>
<comment type="similarity">
    <text evidence="2">Belongs to the isocitrate lyase/PEP mutase superfamily. Oxaloacetate decarboxylase family.</text>
</comment>
<protein>
    <recommendedName>
        <fullName evidence="1">Oxaloacetate decarboxylase</fullName>
        <ecNumber evidence="1">4.1.1.112</ecNumber>
    </recommendedName>
</protein>
<gene>
    <name type="ordered locus">PSPTO_1443</name>
</gene>
<organism>
    <name type="scientific">Pseudomonas syringae pv. tomato (strain ATCC BAA-871 / DC3000)</name>
    <dbReference type="NCBI Taxonomy" id="223283"/>
    <lineage>
        <taxon>Bacteria</taxon>
        <taxon>Pseudomonadati</taxon>
        <taxon>Pseudomonadota</taxon>
        <taxon>Gammaproteobacteria</taxon>
        <taxon>Pseudomonadales</taxon>
        <taxon>Pseudomonadaceae</taxon>
        <taxon>Pseudomonas</taxon>
    </lineage>
</organism>
<name>OADC_PSESM</name>
<dbReference type="EC" id="4.1.1.112" evidence="1"/>
<dbReference type="EMBL" id="AE016853">
    <property type="protein sequence ID" value="AAO54964.1"/>
    <property type="molecule type" value="Genomic_DNA"/>
</dbReference>
<dbReference type="RefSeq" id="NP_791269.1">
    <property type="nucleotide sequence ID" value="NC_004578.1"/>
</dbReference>
<dbReference type="RefSeq" id="WP_011103551.1">
    <property type="nucleotide sequence ID" value="NC_004578.1"/>
</dbReference>
<dbReference type="SMR" id="Q886Y2"/>
<dbReference type="STRING" id="223283.PSPTO_1443"/>
<dbReference type="GeneID" id="1183080"/>
<dbReference type="KEGG" id="pst:PSPTO_1443"/>
<dbReference type="PATRIC" id="fig|223283.9.peg.1463"/>
<dbReference type="eggNOG" id="COG2513">
    <property type="taxonomic scope" value="Bacteria"/>
</dbReference>
<dbReference type="HOGENOM" id="CLU_027389_3_2_6"/>
<dbReference type="OrthoDB" id="9771433at2"/>
<dbReference type="PhylomeDB" id="Q886Y2"/>
<dbReference type="Proteomes" id="UP000002515">
    <property type="component" value="Chromosome"/>
</dbReference>
<dbReference type="GO" id="GO:0000287">
    <property type="term" value="F:magnesium ion binding"/>
    <property type="evidence" value="ECO:0007669"/>
    <property type="project" value="UniProtKB-UniRule"/>
</dbReference>
<dbReference type="GO" id="GO:0046421">
    <property type="term" value="F:methylisocitrate lyase activity"/>
    <property type="evidence" value="ECO:0007669"/>
    <property type="project" value="TreeGrafter"/>
</dbReference>
<dbReference type="GO" id="GO:0008948">
    <property type="term" value="F:oxaloacetate decarboxylase activity"/>
    <property type="evidence" value="ECO:0007669"/>
    <property type="project" value="UniProtKB-UniRule"/>
</dbReference>
<dbReference type="GO" id="GO:0006107">
    <property type="term" value="P:oxaloacetate metabolic process"/>
    <property type="evidence" value="ECO:0007669"/>
    <property type="project" value="UniProtKB-UniRule"/>
</dbReference>
<dbReference type="GO" id="GO:0019629">
    <property type="term" value="P:propionate catabolic process, 2-methylcitrate cycle"/>
    <property type="evidence" value="ECO:0007669"/>
    <property type="project" value="TreeGrafter"/>
</dbReference>
<dbReference type="GO" id="GO:0042866">
    <property type="term" value="P:pyruvate biosynthetic process"/>
    <property type="evidence" value="ECO:0007669"/>
    <property type="project" value="UniProtKB-UniRule"/>
</dbReference>
<dbReference type="CDD" id="cd00377">
    <property type="entry name" value="ICL_PEPM"/>
    <property type="match status" value="1"/>
</dbReference>
<dbReference type="FunFam" id="3.20.20.60:FF:000015">
    <property type="entry name" value="Oxaloacetate decarboxylase"/>
    <property type="match status" value="1"/>
</dbReference>
<dbReference type="Gene3D" id="3.20.20.60">
    <property type="entry name" value="Phosphoenolpyruvate-binding domains"/>
    <property type="match status" value="1"/>
</dbReference>
<dbReference type="HAMAP" id="MF_01299">
    <property type="entry name" value="OadC"/>
    <property type="match status" value="1"/>
</dbReference>
<dbReference type="InterPro" id="IPR039556">
    <property type="entry name" value="ICL/PEPM"/>
</dbReference>
<dbReference type="InterPro" id="IPR023687">
    <property type="entry name" value="Oxaloacetate_deCOase_bac"/>
</dbReference>
<dbReference type="InterPro" id="IPR015813">
    <property type="entry name" value="Pyrv/PenolPyrv_kinase-like_dom"/>
</dbReference>
<dbReference type="InterPro" id="IPR040442">
    <property type="entry name" value="Pyrv_kinase-like_dom_sf"/>
</dbReference>
<dbReference type="PANTHER" id="PTHR42905:SF3">
    <property type="entry name" value="OXALOACETATE DECARBOXYLASE"/>
    <property type="match status" value="1"/>
</dbReference>
<dbReference type="PANTHER" id="PTHR42905">
    <property type="entry name" value="PHOSPHOENOLPYRUVATE CARBOXYLASE"/>
    <property type="match status" value="1"/>
</dbReference>
<dbReference type="Pfam" id="PF13714">
    <property type="entry name" value="PEP_mutase"/>
    <property type="match status" value="1"/>
</dbReference>
<dbReference type="SUPFAM" id="SSF51621">
    <property type="entry name" value="Phosphoenolpyruvate/pyruvate domain"/>
    <property type="match status" value="1"/>
</dbReference>
<accession>Q886Y2</accession>
<proteinExistence type="inferred from homology"/>